<protein>
    <recommendedName>
        <fullName evidence="1">dCTP deaminase</fullName>
        <ecNumber evidence="1">3.5.4.13</ecNumber>
    </recommendedName>
    <alternativeName>
        <fullName evidence="1">Deoxycytidine triphosphate deaminase</fullName>
    </alternativeName>
</protein>
<keyword id="KW-0378">Hydrolase</keyword>
<keyword id="KW-0546">Nucleotide metabolism</keyword>
<keyword id="KW-0547">Nucleotide-binding</keyword>
<feature type="chain" id="PRO_0000156020" description="dCTP deaminase">
    <location>
        <begin position="1"/>
        <end position="189"/>
    </location>
</feature>
<feature type="active site" description="Proton donor/acceptor" evidence="1">
    <location>
        <position position="138"/>
    </location>
</feature>
<feature type="binding site" evidence="1">
    <location>
        <begin position="112"/>
        <end position="117"/>
    </location>
    <ligand>
        <name>dCTP</name>
        <dbReference type="ChEBI" id="CHEBI:61481"/>
    </ligand>
</feature>
<feature type="binding site" evidence="1">
    <location>
        <begin position="136"/>
        <end position="138"/>
    </location>
    <ligand>
        <name>dCTP</name>
        <dbReference type="ChEBI" id="CHEBI:61481"/>
    </ligand>
</feature>
<feature type="binding site" evidence="1">
    <location>
        <position position="157"/>
    </location>
    <ligand>
        <name>dCTP</name>
        <dbReference type="ChEBI" id="CHEBI:61481"/>
    </ligand>
</feature>
<feature type="binding site" evidence="1">
    <location>
        <position position="171"/>
    </location>
    <ligand>
        <name>dCTP</name>
        <dbReference type="ChEBI" id="CHEBI:61481"/>
    </ligand>
</feature>
<feature type="binding site" evidence="1">
    <location>
        <position position="181"/>
    </location>
    <ligand>
        <name>dCTP</name>
        <dbReference type="ChEBI" id="CHEBI:61481"/>
    </ligand>
</feature>
<gene>
    <name evidence="1" type="primary">dcd</name>
    <name type="ordered locus">XAC2740</name>
</gene>
<name>DCD_XANAC</name>
<comment type="function">
    <text evidence="1">Catalyzes the deamination of dCTP to dUTP.</text>
</comment>
<comment type="catalytic activity">
    <reaction evidence="1">
        <text>dCTP + H2O + H(+) = dUTP + NH4(+)</text>
        <dbReference type="Rhea" id="RHEA:22680"/>
        <dbReference type="ChEBI" id="CHEBI:15377"/>
        <dbReference type="ChEBI" id="CHEBI:15378"/>
        <dbReference type="ChEBI" id="CHEBI:28938"/>
        <dbReference type="ChEBI" id="CHEBI:61481"/>
        <dbReference type="ChEBI" id="CHEBI:61555"/>
        <dbReference type="EC" id="3.5.4.13"/>
    </reaction>
</comment>
<comment type="pathway">
    <text evidence="1">Pyrimidine metabolism; dUMP biosynthesis; dUMP from dCTP (dUTP route): step 1/2.</text>
</comment>
<comment type="subunit">
    <text evidence="1">Homotrimer.</text>
</comment>
<comment type="similarity">
    <text evidence="1">Belongs to the dCTP deaminase family.</text>
</comment>
<sequence>MSIKSDRWIKRMAEQHAMIEPFEPGQIKHDAAGQRIVSFGTSSYGYDVRCSREFKVFTNINSTIVDPKHFDPGSFVDIESDVCIIPPNSFALARTVEYFRIPRDTLVVCLGKSTYARCGIIVNVTPLEPEWEGHVTLEFSNTTPLPARIYANEGVAQMLFFQSDEVCETSYKDRGGKYQGQTGVTLPRT</sequence>
<proteinExistence type="inferred from homology"/>
<organism>
    <name type="scientific">Xanthomonas axonopodis pv. citri (strain 306)</name>
    <dbReference type="NCBI Taxonomy" id="190486"/>
    <lineage>
        <taxon>Bacteria</taxon>
        <taxon>Pseudomonadati</taxon>
        <taxon>Pseudomonadota</taxon>
        <taxon>Gammaproteobacteria</taxon>
        <taxon>Lysobacterales</taxon>
        <taxon>Lysobacteraceae</taxon>
        <taxon>Xanthomonas</taxon>
    </lineage>
</organism>
<evidence type="ECO:0000255" key="1">
    <source>
        <dbReference type="HAMAP-Rule" id="MF_00146"/>
    </source>
</evidence>
<dbReference type="EC" id="3.5.4.13" evidence="1"/>
<dbReference type="EMBL" id="AE008923">
    <property type="protein sequence ID" value="AAM37585.1"/>
    <property type="molecule type" value="Genomic_DNA"/>
</dbReference>
<dbReference type="RefSeq" id="WP_005912996.1">
    <property type="nucleotide sequence ID" value="NC_003919.1"/>
</dbReference>
<dbReference type="SMR" id="Q8PJ05"/>
<dbReference type="GeneID" id="93991943"/>
<dbReference type="KEGG" id="xac:XAC2740"/>
<dbReference type="eggNOG" id="COG0717">
    <property type="taxonomic scope" value="Bacteria"/>
</dbReference>
<dbReference type="HOGENOM" id="CLU_087476_4_0_6"/>
<dbReference type="UniPathway" id="UPA00610">
    <property type="reaction ID" value="UER00665"/>
</dbReference>
<dbReference type="Proteomes" id="UP000000576">
    <property type="component" value="Chromosome"/>
</dbReference>
<dbReference type="GO" id="GO:0008829">
    <property type="term" value="F:dCTP deaminase activity"/>
    <property type="evidence" value="ECO:0007669"/>
    <property type="project" value="UniProtKB-UniRule"/>
</dbReference>
<dbReference type="GO" id="GO:0000166">
    <property type="term" value="F:nucleotide binding"/>
    <property type="evidence" value="ECO:0007669"/>
    <property type="project" value="UniProtKB-KW"/>
</dbReference>
<dbReference type="GO" id="GO:0006226">
    <property type="term" value="P:dUMP biosynthetic process"/>
    <property type="evidence" value="ECO:0007669"/>
    <property type="project" value="UniProtKB-UniPathway"/>
</dbReference>
<dbReference type="GO" id="GO:0006229">
    <property type="term" value="P:dUTP biosynthetic process"/>
    <property type="evidence" value="ECO:0007669"/>
    <property type="project" value="UniProtKB-UniRule"/>
</dbReference>
<dbReference type="GO" id="GO:0015949">
    <property type="term" value="P:nucleobase-containing small molecule interconversion"/>
    <property type="evidence" value="ECO:0007669"/>
    <property type="project" value="TreeGrafter"/>
</dbReference>
<dbReference type="CDD" id="cd07557">
    <property type="entry name" value="trimeric_dUTPase"/>
    <property type="match status" value="1"/>
</dbReference>
<dbReference type="FunFam" id="2.70.40.10:FF:000001">
    <property type="entry name" value="dCTP deaminase"/>
    <property type="match status" value="1"/>
</dbReference>
<dbReference type="Gene3D" id="2.70.40.10">
    <property type="match status" value="1"/>
</dbReference>
<dbReference type="HAMAP" id="MF_00146">
    <property type="entry name" value="dCTP_deaminase"/>
    <property type="match status" value="1"/>
</dbReference>
<dbReference type="InterPro" id="IPR011962">
    <property type="entry name" value="dCTP_deaminase"/>
</dbReference>
<dbReference type="InterPro" id="IPR036157">
    <property type="entry name" value="dUTPase-like_sf"/>
</dbReference>
<dbReference type="InterPro" id="IPR033704">
    <property type="entry name" value="dUTPase_trimeric"/>
</dbReference>
<dbReference type="NCBIfam" id="TIGR02274">
    <property type="entry name" value="dCTP_deam"/>
    <property type="match status" value="1"/>
</dbReference>
<dbReference type="PANTHER" id="PTHR42680">
    <property type="entry name" value="DCTP DEAMINASE"/>
    <property type="match status" value="1"/>
</dbReference>
<dbReference type="PANTHER" id="PTHR42680:SF3">
    <property type="entry name" value="DCTP DEAMINASE"/>
    <property type="match status" value="1"/>
</dbReference>
<dbReference type="Pfam" id="PF22769">
    <property type="entry name" value="DCD"/>
    <property type="match status" value="1"/>
</dbReference>
<dbReference type="SUPFAM" id="SSF51283">
    <property type="entry name" value="dUTPase-like"/>
    <property type="match status" value="1"/>
</dbReference>
<reference key="1">
    <citation type="journal article" date="2002" name="Nature">
        <title>Comparison of the genomes of two Xanthomonas pathogens with differing host specificities.</title>
        <authorList>
            <person name="da Silva A.C.R."/>
            <person name="Ferro J.A."/>
            <person name="Reinach F.C."/>
            <person name="Farah C.S."/>
            <person name="Furlan L.R."/>
            <person name="Quaggio R.B."/>
            <person name="Monteiro-Vitorello C.B."/>
            <person name="Van Sluys M.A."/>
            <person name="Almeida N.F. Jr."/>
            <person name="Alves L.M.C."/>
            <person name="do Amaral A.M."/>
            <person name="Bertolini M.C."/>
            <person name="Camargo L.E.A."/>
            <person name="Camarotte G."/>
            <person name="Cannavan F."/>
            <person name="Cardozo J."/>
            <person name="Chambergo F."/>
            <person name="Ciapina L.P."/>
            <person name="Cicarelli R.M.B."/>
            <person name="Coutinho L.L."/>
            <person name="Cursino-Santos J.R."/>
            <person name="El-Dorry H."/>
            <person name="Faria J.B."/>
            <person name="Ferreira A.J.S."/>
            <person name="Ferreira R.C.C."/>
            <person name="Ferro M.I.T."/>
            <person name="Formighieri E.F."/>
            <person name="Franco M.C."/>
            <person name="Greggio C.C."/>
            <person name="Gruber A."/>
            <person name="Katsuyama A.M."/>
            <person name="Kishi L.T."/>
            <person name="Leite R.P."/>
            <person name="Lemos E.G.M."/>
            <person name="Lemos M.V.F."/>
            <person name="Locali E.C."/>
            <person name="Machado M.A."/>
            <person name="Madeira A.M.B.N."/>
            <person name="Martinez-Rossi N.M."/>
            <person name="Martins E.C."/>
            <person name="Meidanis J."/>
            <person name="Menck C.F.M."/>
            <person name="Miyaki C.Y."/>
            <person name="Moon D.H."/>
            <person name="Moreira L.M."/>
            <person name="Novo M.T.M."/>
            <person name="Okura V.K."/>
            <person name="Oliveira M.C."/>
            <person name="Oliveira V.R."/>
            <person name="Pereira H.A."/>
            <person name="Rossi A."/>
            <person name="Sena J.A.D."/>
            <person name="Silva C."/>
            <person name="de Souza R.F."/>
            <person name="Spinola L.A.F."/>
            <person name="Takita M.A."/>
            <person name="Tamura R.E."/>
            <person name="Teixeira E.C."/>
            <person name="Tezza R.I.D."/>
            <person name="Trindade dos Santos M."/>
            <person name="Truffi D."/>
            <person name="Tsai S.M."/>
            <person name="White F.F."/>
            <person name="Setubal J.C."/>
            <person name="Kitajima J.P."/>
        </authorList>
    </citation>
    <scope>NUCLEOTIDE SEQUENCE [LARGE SCALE GENOMIC DNA]</scope>
    <source>
        <strain>306</strain>
    </source>
</reference>
<accession>Q8PJ05</accession>